<accession>A9BCV9</accession>
<comment type="function">
    <text evidence="1">Catalyzes the methylthiolation of an aspartic acid residue of ribosomal protein uS12.</text>
</comment>
<comment type="catalytic activity">
    <reaction evidence="1">
        <text>L-aspartate(89)-[ribosomal protein uS12]-hydrogen + (sulfur carrier)-SH + AH2 + 2 S-adenosyl-L-methionine = 3-methylsulfanyl-L-aspartate(89)-[ribosomal protein uS12]-hydrogen + (sulfur carrier)-H + 5'-deoxyadenosine + L-methionine + A + S-adenosyl-L-homocysteine + 2 H(+)</text>
        <dbReference type="Rhea" id="RHEA:37087"/>
        <dbReference type="Rhea" id="RHEA-COMP:10460"/>
        <dbReference type="Rhea" id="RHEA-COMP:10461"/>
        <dbReference type="Rhea" id="RHEA-COMP:14737"/>
        <dbReference type="Rhea" id="RHEA-COMP:14739"/>
        <dbReference type="ChEBI" id="CHEBI:13193"/>
        <dbReference type="ChEBI" id="CHEBI:15378"/>
        <dbReference type="ChEBI" id="CHEBI:17319"/>
        <dbReference type="ChEBI" id="CHEBI:17499"/>
        <dbReference type="ChEBI" id="CHEBI:29917"/>
        <dbReference type="ChEBI" id="CHEBI:29961"/>
        <dbReference type="ChEBI" id="CHEBI:57844"/>
        <dbReference type="ChEBI" id="CHEBI:57856"/>
        <dbReference type="ChEBI" id="CHEBI:59789"/>
        <dbReference type="ChEBI" id="CHEBI:64428"/>
        <dbReference type="ChEBI" id="CHEBI:73599"/>
        <dbReference type="EC" id="2.8.4.4"/>
    </reaction>
</comment>
<comment type="cofactor">
    <cofactor evidence="1">
        <name>[4Fe-4S] cluster</name>
        <dbReference type="ChEBI" id="CHEBI:49883"/>
    </cofactor>
    <text evidence="1">Binds 2 [4Fe-4S] clusters. One cluster is coordinated with 3 cysteines and an exchangeable S-adenosyl-L-methionine.</text>
</comment>
<comment type="subcellular location">
    <subcellularLocation>
        <location evidence="1">Cytoplasm</location>
    </subcellularLocation>
</comment>
<comment type="similarity">
    <text evidence="1">Belongs to the methylthiotransferase family. RimO subfamily.</text>
</comment>
<proteinExistence type="inferred from homology"/>
<sequence length="462" mass="51341">MHTSVFKEPKNNDAVLSNHCNASVAFLHLGCEKNLVDTEHMMGLLASEGYGVSSNTDDAEVVVVNTCSFIEQAREESVRALVGLADQGKEIIIAGCLAQHFKSELLESIPEAKAIVGTGDYQNIIEVLQRVRQGERVNQVSENPKFVGDENLPRYRTTGRFVSYLKVAEGCNYRCAFCIIPTLRGNQRSRSVQSIVNEANQLAKEGIQELILISQITTNYGMDLYGRPYLADLLRALSHVDIPWIRIHYAYPTGLTPEVVLAYKEVPNVLPYFDLPLQHSHPDVLRAMNRPWQSDVSSALLNRIKEQLPEAVMRTTLIVGFPGETKAQFDHLCAFVENQKFDHVGVFAFSREEGTEAAKLPNQVPFEIAQARKDKLVAIQQPISAAKNQALIGQTVDVLIEREDLATGELIGRSARFAPEVDGEVRLRPSQVLFNDLHGKIVPALITGSELYDLTGEINHLN</sequence>
<feature type="chain" id="PRO_0000374927" description="Ribosomal protein uS12 methylthiotransferase RimO">
    <location>
        <begin position="1"/>
        <end position="462"/>
    </location>
</feature>
<feature type="domain" description="MTTase N-terminal" evidence="1">
    <location>
        <begin position="22"/>
        <end position="133"/>
    </location>
</feature>
<feature type="domain" description="Radical SAM core" evidence="2">
    <location>
        <begin position="157"/>
        <end position="386"/>
    </location>
</feature>
<feature type="domain" description="TRAM" evidence="1">
    <location>
        <begin position="389"/>
        <end position="460"/>
    </location>
</feature>
<feature type="binding site" evidence="1">
    <location>
        <position position="31"/>
    </location>
    <ligand>
        <name>[4Fe-4S] cluster</name>
        <dbReference type="ChEBI" id="CHEBI:49883"/>
        <label>1</label>
    </ligand>
</feature>
<feature type="binding site" evidence="1">
    <location>
        <position position="67"/>
    </location>
    <ligand>
        <name>[4Fe-4S] cluster</name>
        <dbReference type="ChEBI" id="CHEBI:49883"/>
        <label>1</label>
    </ligand>
</feature>
<feature type="binding site" evidence="1">
    <location>
        <position position="96"/>
    </location>
    <ligand>
        <name>[4Fe-4S] cluster</name>
        <dbReference type="ChEBI" id="CHEBI:49883"/>
        <label>1</label>
    </ligand>
</feature>
<feature type="binding site" evidence="1">
    <location>
        <position position="171"/>
    </location>
    <ligand>
        <name>[4Fe-4S] cluster</name>
        <dbReference type="ChEBI" id="CHEBI:49883"/>
        <label>2</label>
        <note>4Fe-4S-S-AdoMet</note>
    </ligand>
</feature>
<feature type="binding site" evidence="1">
    <location>
        <position position="175"/>
    </location>
    <ligand>
        <name>[4Fe-4S] cluster</name>
        <dbReference type="ChEBI" id="CHEBI:49883"/>
        <label>2</label>
        <note>4Fe-4S-S-AdoMet</note>
    </ligand>
</feature>
<feature type="binding site" evidence="1">
    <location>
        <position position="178"/>
    </location>
    <ligand>
        <name>[4Fe-4S] cluster</name>
        <dbReference type="ChEBI" id="CHEBI:49883"/>
        <label>2</label>
        <note>4Fe-4S-S-AdoMet</note>
    </ligand>
</feature>
<gene>
    <name evidence="1" type="primary">rimO</name>
    <name type="ordered locus">P9211_01161</name>
</gene>
<organism>
    <name type="scientific">Prochlorococcus marinus (strain MIT 9211)</name>
    <dbReference type="NCBI Taxonomy" id="93059"/>
    <lineage>
        <taxon>Bacteria</taxon>
        <taxon>Bacillati</taxon>
        <taxon>Cyanobacteriota</taxon>
        <taxon>Cyanophyceae</taxon>
        <taxon>Synechococcales</taxon>
        <taxon>Prochlorococcaceae</taxon>
        <taxon>Prochlorococcus</taxon>
    </lineage>
</organism>
<reference key="1">
    <citation type="journal article" date="2007" name="PLoS Genet.">
        <title>Patterns and implications of gene gain and loss in the evolution of Prochlorococcus.</title>
        <authorList>
            <person name="Kettler G.C."/>
            <person name="Martiny A.C."/>
            <person name="Huang K."/>
            <person name="Zucker J."/>
            <person name="Coleman M.L."/>
            <person name="Rodrigue S."/>
            <person name="Chen F."/>
            <person name="Lapidus A."/>
            <person name="Ferriera S."/>
            <person name="Johnson J."/>
            <person name="Steglich C."/>
            <person name="Church G.M."/>
            <person name="Richardson P."/>
            <person name="Chisholm S.W."/>
        </authorList>
    </citation>
    <scope>NUCLEOTIDE SEQUENCE [LARGE SCALE GENOMIC DNA]</scope>
    <source>
        <strain>MIT 9211</strain>
    </source>
</reference>
<evidence type="ECO:0000255" key="1">
    <source>
        <dbReference type="HAMAP-Rule" id="MF_01865"/>
    </source>
</evidence>
<evidence type="ECO:0000255" key="2">
    <source>
        <dbReference type="PROSITE-ProRule" id="PRU01266"/>
    </source>
</evidence>
<name>RIMO_PROM4</name>
<keyword id="KW-0004">4Fe-4S</keyword>
<keyword id="KW-0963">Cytoplasm</keyword>
<keyword id="KW-0408">Iron</keyword>
<keyword id="KW-0411">Iron-sulfur</keyword>
<keyword id="KW-0479">Metal-binding</keyword>
<keyword id="KW-1185">Reference proteome</keyword>
<keyword id="KW-0949">S-adenosyl-L-methionine</keyword>
<keyword id="KW-0808">Transferase</keyword>
<dbReference type="EC" id="2.8.4.4" evidence="1"/>
<dbReference type="EMBL" id="CP000878">
    <property type="protein sequence ID" value="ABX08047.1"/>
    <property type="molecule type" value="Genomic_DNA"/>
</dbReference>
<dbReference type="RefSeq" id="WP_012194672.1">
    <property type="nucleotide sequence ID" value="NC_009976.1"/>
</dbReference>
<dbReference type="SMR" id="A9BCV9"/>
<dbReference type="STRING" id="93059.P9211_01161"/>
<dbReference type="KEGG" id="pmj:P9211_01161"/>
<dbReference type="eggNOG" id="COG0621">
    <property type="taxonomic scope" value="Bacteria"/>
</dbReference>
<dbReference type="HOGENOM" id="CLU_018697_0_1_3"/>
<dbReference type="OrthoDB" id="9805215at2"/>
<dbReference type="Proteomes" id="UP000000788">
    <property type="component" value="Chromosome"/>
</dbReference>
<dbReference type="GO" id="GO:0005829">
    <property type="term" value="C:cytosol"/>
    <property type="evidence" value="ECO:0007669"/>
    <property type="project" value="TreeGrafter"/>
</dbReference>
<dbReference type="GO" id="GO:0051539">
    <property type="term" value="F:4 iron, 4 sulfur cluster binding"/>
    <property type="evidence" value="ECO:0007669"/>
    <property type="project" value="UniProtKB-UniRule"/>
</dbReference>
<dbReference type="GO" id="GO:0035599">
    <property type="term" value="F:aspartic acid methylthiotransferase activity"/>
    <property type="evidence" value="ECO:0007669"/>
    <property type="project" value="TreeGrafter"/>
</dbReference>
<dbReference type="GO" id="GO:0046872">
    <property type="term" value="F:metal ion binding"/>
    <property type="evidence" value="ECO:0007669"/>
    <property type="project" value="UniProtKB-KW"/>
</dbReference>
<dbReference type="GO" id="GO:0103039">
    <property type="term" value="F:protein methylthiotransferase activity"/>
    <property type="evidence" value="ECO:0007669"/>
    <property type="project" value="UniProtKB-EC"/>
</dbReference>
<dbReference type="GO" id="GO:0006400">
    <property type="term" value="P:tRNA modification"/>
    <property type="evidence" value="ECO:0007669"/>
    <property type="project" value="InterPro"/>
</dbReference>
<dbReference type="CDD" id="cd01335">
    <property type="entry name" value="Radical_SAM"/>
    <property type="match status" value="1"/>
</dbReference>
<dbReference type="FunFam" id="3.80.30.20:FF:000001">
    <property type="entry name" value="tRNA-2-methylthio-N(6)-dimethylallyladenosine synthase 2"/>
    <property type="match status" value="1"/>
</dbReference>
<dbReference type="Gene3D" id="3.40.50.12160">
    <property type="entry name" value="Methylthiotransferase, N-terminal domain"/>
    <property type="match status" value="1"/>
</dbReference>
<dbReference type="Gene3D" id="2.40.50.140">
    <property type="entry name" value="Nucleic acid-binding proteins"/>
    <property type="match status" value="1"/>
</dbReference>
<dbReference type="Gene3D" id="3.80.30.20">
    <property type="entry name" value="tm_1862 like domain"/>
    <property type="match status" value="1"/>
</dbReference>
<dbReference type="HAMAP" id="MF_01865">
    <property type="entry name" value="MTTase_RimO"/>
    <property type="match status" value="1"/>
</dbReference>
<dbReference type="InterPro" id="IPR006638">
    <property type="entry name" value="Elp3/MiaA/NifB-like_rSAM"/>
</dbReference>
<dbReference type="InterPro" id="IPR005839">
    <property type="entry name" value="Methylthiotransferase"/>
</dbReference>
<dbReference type="InterPro" id="IPR020612">
    <property type="entry name" value="Methylthiotransferase_CS"/>
</dbReference>
<dbReference type="InterPro" id="IPR013848">
    <property type="entry name" value="Methylthiotransferase_N"/>
</dbReference>
<dbReference type="InterPro" id="IPR038135">
    <property type="entry name" value="Methylthiotransferase_N_sf"/>
</dbReference>
<dbReference type="InterPro" id="IPR012340">
    <property type="entry name" value="NA-bd_OB-fold"/>
</dbReference>
<dbReference type="InterPro" id="IPR005840">
    <property type="entry name" value="Ribosomal_uS12_MeSTrfase_RimO"/>
</dbReference>
<dbReference type="InterPro" id="IPR007197">
    <property type="entry name" value="rSAM"/>
</dbReference>
<dbReference type="InterPro" id="IPR023404">
    <property type="entry name" value="rSAM_horseshoe"/>
</dbReference>
<dbReference type="InterPro" id="IPR002792">
    <property type="entry name" value="TRAM_dom"/>
</dbReference>
<dbReference type="NCBIfam" id="TIGR01125">
    <property type="entry name" value="30S ribosomal protein S12 methylthiotransferase RimO"/>
    <property type="match status" value="1"/>
</dbReference>
<dbReference type="NCBIfam" id="TIGR00089">
    <property type="entry name" value="MiaB/RimO family radical SAM methylthiotransferase"/>
    <property type="match status" value="1"/>
</dbReference>
<dbReference type="PANTHER" id="PTHR43837">
    <property type="entry name" value="RIBOSOMAL PROTEIN S12 METHYLTHIOTRANSFERASE RIMO"/>
    <property type="match status" value="1"/>
</dbReference>
<dbReference type="PANTHER" id="PTHR43837:SF1">
    <property type="entry name" value="RIBOSOMAL PROTEIN US12 METHYLTHIOTRANSFERASE RIMO"/>
    <property type="match status" value="1"/>
</dbReference>
<dbReference type="Pfam" id="PF04055">
    <property type="entry name" value="Radical_SAM"/>
    <property type="match status" value="1"/>
</dbReference>
<dbReference type="Pfam" id="PF18693">
    <property type="entry name" value="TRAM_2"/>
    <property type="match status" value="1"/>
</dbReference>
<dbReference type="Pfam" id="PF00919">
    <property type="entry name" value="UPF0004"/>
    <property type="match status" value="1"/>
</dbReference>
<dbReference type="SFLD" id="SFLDG01082">
    <property type="entry name" value="B12-binding_domain_containing"/>
    <property type="match status" value="1"/>
</dbReference>
<dbReference type="SFLD" id="SFLDS00029">
    <property type="entry name" value="Radical_SAM"/>
    <property type="match status" value="1"/>
</dbReference>
<dbReference type="SFLD" id="SFLDF00274">
    <property type="entry name" value="ribosomal_protein_S12_methylth"/>
    <property type="match status" value="1"/>
</dbReference>
<dbReference type="SMART" id="SM00729">
    <property type="entry name" value="Elp3"/>
    <property type="match status" value="1"/>
</dbReference>
<dbReference type="SUPFAM" id="SSF102114">
    <property type="entry name" value="Radical SAM enzymes"/>
    <property type="match status" value="1"/>
</dbReference>
<dbReference type="PROSITE" id="PS51449">
    <property type="entry name" value="MTTASE_N"/>
    <property type="match status" value="1"/>
</dbReference>
<dbReference type="PROSITE" id="PS01278">
    <property type="entry name" value="MTTASE_RADICAL"/>
    <property type="match status" value="1"/>
</dbReference>
<dbReference type="PROSITE" id="PS51918">
    <property type="entry name" value="RADICAL_SAM"/>
    <property type="match status" value="1"/>
</dbReference>
<dbReference type="PROSITE" id="PS50926">
    <property type="entry name" value="TRAM"/>
    <property type="match status" value="1"/>
</dbReference>
<protein>
    <recommendedName>
        <fullName evidence="1">Ribosomal protein uS12 methylthiotransferase RimO</fullName>
        <shortName evidence="1">uS12 MTTase</shortName>
        <shortName evidence="1">uS12 methylthiotransferase</shortName>
        <ecNumber evidence="1">2.8.4.4</ecNumber>
    </recommendedName>
    <alternativeName>
        <fullName evidence="1">Ribosomal protein uS12 (aspartate-C(3))-methylthiotransferase</fullName>
    </alternativeName>
    <alternativeName>
        <fullName evidence="1">Ribosome maturation factor RimO</fullName>
    </alternativeName>
</protein>